<sequence length="528" mass="58580">MASPDLFPNVSFSHVSVPAAAGASTEVTGGATAVFGGDASTGAPRLSLVWSGETQAKHTLEIDLSDAQIFKLGPTEWLCVSGESEAKDGVEEKSYSRAIKVVLRTEAESKAFYLAFQQWKHRVISGKAGEPLENGLIIGSKSKFDTKIEASSAKMYFHYYGQLLHQQNMLQDFVRTGTYYAAVMENRSDFEGRVVVDVGAGSGILSLFAAQAGARHVYAVEASEMAEHAQRLISGNPSLGQRITVIKGKVEEVELPEKADILISEPMGTLLVNERMLESYVIARDRFLVPGGKMFPTTGRIHMAPFSDEYLYVEMANKALFWQQHNFFGVDLTPLHGSAFQGYFSQPVVDAFDPRLLVSPPTFHTLDFTTMKEEELYEIDIPLNFVASVGTRVHGLACWFDVLFNGSTVQRWLTTAPGSPTTHWYQLRCILSQPLYVMAGQEITGRLHLVAHSAQSYTIYLTMSAKMWGEGAEQGGILQTSTAKLELKEPYYRLSQPQPYVMQQDQQQQQLPSLQPQSPLWDYHYGQD</sequence>
<feature type="chain" id="PRO_0000294007" description="Probable histone-arginine methyltransferase CARM1">
    <location>
        <begin position="1"/>
        <end position="528"/>
    </location>
</feature>
<feature type="domain" description="SAM-dependent MTase PRMT-type" evidence="2">
    <location>
        <begin position="149"/>
        <end position="464"/>
    </location>
</feature>
<feature type="region of interest" description="Disordered" evidence="3">
    <location>
        <begin position="500"/>
        <end position="528"/>
    </location>
</feature>
<feature type="compositionally biased region" description="Low complexity" evidence="3">
    <location>
        <begin position="500"/>
        <end position="520"/>
    </location>
</feature>
<feature type="binding site" evidence="1">
    <location>
        <position position="166"/>
    </location>
    <ligand>
        <name>S-adenosyl-L-methionine</name>
        <dbReference type="ChEBI" id="CHEBI:59789"/>
    </ligand>
</feature>
<feature type="binding site" evidence="1">
    <location>
        <position position="175"/>
    </location>
    <ligand>
        <name>S-adenosyl-L-methionine</name>
        <dbReference type="ChEBI" id="CHEBI:59789"/>
    </ligand>
</feature>
<feature type="binding site" evidence="1">
    <location>
        <position position="199"/>
    </location>
    <ligand>
        <name>S-adenosyl-L-methionine</name>
        <dbReference type="ChEBI" id="CHEBI:59789"/>
    </ligand>
</feature>
<feature type="binding site" evidence="1">
    <location>
        <position position="221"/>
    </location>
    <ligand>
        <name>S-adenosyl-L-methionine</name>
        <dbReference type="ChEBI" id="CHEBI:59789"/>
    </ligand>
</feature>
<feature type="binding site" evidence="1">
    <location>
        <position position="251"/>
    </location>
    <ligand>
        <name>S-adenosyl-L-methionine</name>
        <dbReference type="ChEBI" id="CHEBI:59789"/>
    </ligand>
</feature>
<feature type="binding site" evidence="1">
    <location>
        <position position="279"/>
    </location>
    <ligand>
        <name>S-adenosyl-L-methionine</name>
        <dbReference type="ChEBI" id="CHEBI:59789"/>
    </ligand>
</feature>
<dbReference type="EC" id="2.1.1.319"/>
<dbReference type="EMBL" id="AP004300">
    <property type="protein sequence ID" value="BAC79844.1"/>
    <property type="molecule type" value="Genomic_DNA"/>
</dbReference>
<dbReference type="EMBL" id="AP008213">
    <property type="protein sequence ID" value="BAF22514.1"/>
    <property type="molecule type" value="Genomic_DNA"/>
</dbReference>
<dbReference type="EMBL" id="AP014963">
    <property type="protein sequence ID" value="BAT03158.1"/>
    <property type="molecule type" value="Genomic_DNA"/>
</dbReference>
<dbReference type="EMBL" id="CM000144">
    <property type="protein sequence ID" value="EEE67794.1"/>
    <property type="molecule type" value="Genomic_DNA"/>
</dbReference>
<dbReference type="EMBL" id="AK065980">
    <property type="protein sequence ID" value="BAG89761.1"/>
    <property type="molecule type" value="mRNA"/>
</dbReference>
<dbReference type="RefSeq" id="XP_015647687.1">
    <property type="nucleotide sequence ID" value="XM_015792201.1"/>
</dbReference>
<dbReference type="SMR" id="Q7XI75"/>
<dbReference type="FunCoup" id="Q7XI75">
    <property type="interactions" value="1840"/>
</dbReference>
<dbReference type="STRING" id="39947.Q7XI75"/>
<dbReference type="PaxDb" id="39947-Q7XI75"/>
<dbReference type="EnsemblPlants" id="Os07t0671700-01">
    <property type="protein sequence ID" value="Os07t0671700-01"/>
    <property type="gene ID" value="Os07g0671700"/>
</dbReference>
<dbReference type="Gramene" id="Os07t0671700-01">
    <property type="protein sequence ID" value="Os07t0671700-01"/>
    <property type="gene ID" value="Os07g0671700"/>
</dbReference>
<dbReference type="KEGG" id="dosa:Os07g0671700"/>
<dbReference type="eggNOG" id="KOG1500">
    <property type="taxonomic scope" value="Eukaryota"/>
</dbReference>
<dbReference type="HOGENOM" id="CLU_017375_0_2_1"/>
<dbReference type="InParanoid" id="Q7XI75"/>
<dbReference type="OMA" id="GIGDGMD"/>
<dbReference type="OrthoDB" id="7848332at2759"/>
<dbReference type="Proteomes" id="UP000000763">
    <property type="component" value="Chromosome 7"/>
</dbReference>
<dbReference type="Proteomes" id="UP000007752">
    <property type="component" value="Chromosome 7"/>
</dbReference>
<dbReference type="Proteomes" id="UP000059680">
    <property type="component" value="Chromosome 7"/>
</dbReference>
<dbReference type="GO" id="GO:0005737">
    <property type="term" value="C:cytoplasm"/>
    <property type="evidence" value="ECO:0007669"/>
    <property type="project" value="UniProtKB-SubCell"/>
</dbReference>
<dbReference type="GO" id="GO:0005634">
    <property type="term" value="C:nucleus"/>
    <property type="evidence" value="ECO:0007669"/>
    <property type="project" value="UniProtKB-SubCell"/>
</dbReference>
<dbReference type="GO" id="GO:0035642">
    <property type="term" value="F:histone H3R17 methyltransferase activity"/>
    <property type="evidence" value="ECO:0000250"/>
    <property type="project" value="UniProtKB"/>
</dbReference>
<dbReference type="GO" id="GO:0070611">
    <property type="term" value="F:histone H3R2 methyltransferase activity"/>
    <property type="evidence" value="ECO:0000250"/>
    <property type="project" value="UniProtKB"/>
</dbReference>
<dbReference type="GO" id="GO:0140903">
    <property type="term" value="F:histone H3R26 methyltransferase activity"/>
    <property type="evidence" value="ECO:0000250"/>
    <property type="project" value="UniProtKB"/>
</dbReference>
<dbReference type="GO" id="GO:0035242">
    <property type="term" value="F:protein-arginine omega-N asymmetric methyltransferase activity"/>
    <property type="evidence" value="ECO:0007669"/>
    <property type="project" value="UniProtKB-EC"/>
</dbReference>
<dbReference type="GO" id="GO:0006338">
    <property type="term" value="P:chromatin remodeling"/>
    <property type="evidence" value="ECO:0000318"/>
    <property type="project" value="GO_Central"/>
</dbReference>
<dbReference type="GO" id="GO:0032259">
    <property type="term" value="P:methylation"/>
    <property type="evidence" value="ECO:0007669"/>
    <property type="project" value="UniProtKB-KW"/>
</dbReference>
<dbReference type="GO" id="GO:0006355">
    <property type="term" value="P:regulation of DNA-templated transcription"/>
    <property type="evidence" value="ECO:0000318"/>
    <property type="project" value="GO_Central"/>
</dbReference>
<dbReference type="CDD" id="cd02440">
    <property type="entry name" value="AdoMet_MTases"/>
    <property type="match status" value="1"/>
</dbReference>
<dbReference type="FunFam" id="2.70.160.11:FF:000002">
    <property type="entry name" value="Probable histone-arginine methyltransferase CARM1"/>
    <property type="match status" value="1"/>
</dbReference>
<dbReference type="FunFam" id="3.40.50.150:FF:000052">
    <property type="entry name" value="Probable histone-arginine methyltransferase CARM1"/>
    <property type="match status" value="1"/>
</dbReference>
<dbReference type="Gene3D" id="2.70.160.11">
    <property type="entry name" value="Hnrnp arginine n-methyltransferase1"/>
    <property type="match status" value="1"/>
</dbReference>
<dbReference type="Gene3D" id="3.40.50.150">
    <property type="entry name" value="Vaccinia Virus protein VP39"/>
    <property type="match status" value="1"/>
</dbReference>
<dbReference type="InterPro" id="IPR025799">
    <property type="entry name" value="Arg_MeTrfase"/>
</dbReference>
<dbReference type="InterPro" id="IPR055135">
    <property type="entry name" value="PRMT_dom"/>
</dbReference>
<dbReference type="InterPro" id="IPR029063">
    <property type="entry name" value="SAM-dependent_MTases_sf"/>
</dbReference>
<dbReference type="PANTHER" id="PTHR11006:SF10">
    <property type="entry name" value="HISTONE-ARGININE METHYLTRANSFERASE CARMER-RELATED"/>
    <property type="match status" value="1"/>
</dbReference>
<dbReference type="PANTHER" id="PTHR11006">
    <property type="entry name" value="PROTEIN ARGININE N-METHYLTRANSFERASE"/>
    <property type="match status" value="1"/>
</dbReference>
<dbReference type="Pfam" id="PF25350">
    <property type="entry name" value="PH_PRMT_N"/>
    <property type="match status" value="1"/>
</dbReference>
<dbReference type="Pfam" id="PF06325">
    <property type="entry name" value="PrmA"/>
    <property type="match status" value="1"/>
</dbReference>
<dbReference type="Pfam" id="PF22528">
    <property type="entry name" value="PRMT_C"/>
    <property type="match status" value="1"/>
</dbReference>
<dbReference type="SUPFAM" id="SSF53335">
    <property type="entry name" value="S-adenosyl-L-methionine-dependent methyltransferases"/>
    <property type="match status" value="1"/>
</dbReference>
<dbReference type="PROSITE" id="PS51678">
    <property type="entry name" value="SAM_MT_PRMT"/>
    <property type="match status" value="1"/>
</dbReference>
<name>CARM1_ORYSJ</name>
<accession>Q7XI75</accession>
<accession>A3BNA6</accession>
<accession>B7EBL4</accession>
<protein>
    <recommendedName>
        <fullName>Probable histone-arginine methyltransferase CARM1</fullName>
        <ecNumber>2.1.1.319</ecNumber>
    </recommendedName>
    <alternativeName>
        <fullName>Protein arginine N-methyltransferase 4</fullName>
    </alternativeName>
</protein>
<keyword id="KW-0156">Chromatin regulator</keyword>
<keyword id="KW-0963">Cytoplasm</keyword>
<keyword id="KW-0489">Methyltransferase</keyword>
<keyword id="KW-0539">Nucleus</keyword>
<keyword id="KW-1185">Reference proteome</keyword>
<keyword id="KW-0949">S-adenosyl-L-methionine</keyword>
<keyword id="KW-0804">Transcription</keyword>
<keyword id="KW-0805">Transcription regulation</keyword>
<keyword id="KW-0808">Transferase</keyword>
<organism>
    <name type="scientific">Oryza sativa subsp. japonica</name>
    <name type="common">Rice</name>
    <dbReference type="NCBI Taxonomy" id="39947"/>
    <lineage>
        <taxon>Eukaryota</taxon>
        <taxon>Viridiplantae</taxon>
        <taxon>Streptophyta</taxon>
        <taxon>Embryophyta</taxon>
        <taxon>Tracheophyta</taxon>
        <taxon>Spermatophyta</taxon>
        <taxon>Magnoliopsida</taxon>
        <taxon>Liliopsida</taxon>
        <taxon>Poales</taxon>
        <taxon>Poaceae</taxon>
        <taxon>BOP clade</taxon>
        <taxon>Oryzoideae</taxon>
        <taxon>Oryzeae</taxon>
        <taxon>Oryzinae</taxon>
        <taxon>Oryza</taxon>
        <taxon>Oryza sativa</taxon>
    </lineage>
</organism>
<proteinExistence type="evidence at transcript level"/>
<gene>
    <name type="primary">CARM1</name>
    <name type="synonym">PRMT4</name>
    <name type="ordered locus">Os07g0671700</name>
    <name type="ordered locus">LOC_Os07g47500</name>
    <name evidence="4" type="ORF">OsJ_25531</name>
    <name type="ORF">P0470D12.124</name>
</gene>
<evidence type="ECO:0000250" key="1"/>
<evidence type="ECO:0000255" key="2">
    <source>
        <dbReference type="PROSITE-ProRule" id="PRU01015"/>
    </source>
</evidence>
<evidence type="ECO:0000256" key="3">
    <source>
        <dbReference type="SAM" id="MobiDB-lite"/>
    </source>
</evidence>
<evidence type="ECO:0000312" key="4">
    <source>
        <dbReference type="EMBL" id="EEE67794.1"/>
    </source>
</evidence>
<reference key="1">
    <citation type="journal article" date="2005" name="Nature">
        <title>The map-based sequence of the rice genome.</title>
        <authorList>
            <consortium name="International rice genome sequencing project (IRGSP)"/>
        </authorList>
    </citation>
    <scope>NUCLEOTIDE SEQUENCE [LARGE SCALE GENOMIC DNA]</scope>
    <source>
        <strain>cv. Nipponbare</strain>
    </source>
</reference>
<reference key="2">
    <citation type="journal article" date="2008" name="Nucleic Acids Res.">
        <title>The rice annotation project database (RAP-DB): 2008 update.</title>
        <authorList>
            <consortium name="The rice annotation project (RAP)"/>
        </authorList>
    </citation>
    <scope>GENOME REANNOTATION</scope>
    <source>
        <strain>cv. Nipponbare</strain>
    </source>
</reference>
<reference key="3">
    <citation type="journal article" date="2013" name="Rice">
        <title>Improvement of the Oryza sativa Nipponbare reference genome using next generation sequence and optical map data.</title>
        <authorList>
            <person name="Kawahara Y."/>
            <person name="de la Bastide M."/>
            <person name="Hamilton J.P."/>
            <person name="Kanamori H."/>
            <person name="McCombie W.R."/>
            <person name="Ouyang S."/>
            <person name="Schwartz D.C."/>
            <person name="Tanaka T."/>
            <person name="Wu J."/>
            <person name="Zhou S."/>
            <person name="Childs K.L."/>
            <person name="Davidson R.M."/>
            <person name="Lin H."/>
            <person name="Quesada-Ocampo L."/>
            <person name="Vaillancourt B."/>
            <person name="Sakai H."/>
            <person name="Lee S.S."/>
            <person name="Kim J."/>
            <person name="Numa H."/>
            <person name="Itoh T."/>
            <person name="Buell C.R."/>
            <person name="Matsumoto T."/>
        </authorList>
    </citation>
    <scope>GENOME REANNOTATION</scope>
    <source>
        <strain>cv. Nipponbare</strain>
    </source>
</reference>
<reference key="4">
    <citation type="journal article" date="2005" name="PLoS Biol.">
        <title>The genomes of Oryza sativa: a history of duplications.</title>
        <authorList>
            <person name="Yu J."/>
            <person name="Wang J."/>
            <person name="Lin W."/>
            <person name="Li S."/>
            <person name="Li H."/>
            <person name="Zhou J."/>
            <person name="Ni P."/>
            <person name="Dong W."/>
            <person name="Hu S."/>
            <person name="Zeng C."/>
            <person name="Zhang J."/>
            <person name="Zhang Y."/>
            <person name="Li R."/>
            <person name="Xu Z."/>
            <person name="Li S."/>
            <person name="Li X."/>
            <person name="Zheng H."/>
            <person name="Cong L."/>
            <person name="Lin L."/>
            <person name="Yin J."/>
            <person name="Geng J."/>
            <person name="Li G."/>
            <person name="Shi J."/>
            <person name="Liu J."/>
            <person name="Lv H."/>
            <person name="Li J."/>
            <person name="Wang J."/>
            <person name="Deng Y."/>
            <person name="Ran L."/>
            <person name="Shi X."/>
            <person name="Wang X."/>
            <person name="Wu Q."/>
            <person name="Li C."/>
            <person name="Ren X."/>
            <person name="Wang J."/>
            <person name="Wang X."/>
            <person name="Li D."/>
            <person name="Liu D."/>
            <person name="Zhang X."/>
            <person name="Ji Z."/>
            <person name="Zhao W."/>
            <person name="Sun Y."/>
            <person name="Zhang Z."/>
            <person name="Bao J."/>
            <person name="Han Y."/>
            <person name="Dong L."/>
            <person name="Ji J."/>
            <person name="Chen P."/>
            <person name="Wu S."/>
            <person name="Liu J."/>
            <person name="Xiao Y."/>
            <person name="Bu D."/>
            <person name="Tan J."/>
            <person name="Yang L."/>
            <person name="Ye C."/>
            <person name="Zhang J."/>
            <person name="Xu J."/>
            <person name="Zhou Y."/>
            <person name="Yu Y."/>
            <person name="Zhang B."/>
            <person name="Zhuang S."/>
            <person name="Wei H."/>
            <person name="Liu B."/>
            <person name="Lei M."/>
            <person name="Yu H."/>
            <person name="Li Y."/>
            <person name="Xu H."/>
            <person name="Wei S."/>
            <person name="He X."/>
            <person name="Fang L."/>
            <person name="Zhang Z."/>
            <person name="Zhang Y."/>
            <person name="Huang X."/>
            <person name="Su Z."/>
            <person name="Tong W."/>
            <person name="Li J."/>
            <person name="Tong Z."/>
            <person name="Li S."/>
            <person name="Ye J."/>
            <person name="Wang L."/>
            <person name="Fang L."/>
            <person name="Lei T."/>
            <person name="Chen C.-S."/>
            <person name="Chen H.-C."/>
            <person name="Xu Z."/>
            <person name="Li H."/>
            <person name="Huang H."/>
            <person name="Zhang F."/>
            <person name="Xu H."/>
            <person name="Li N."/>
            <person name="Zhao C."/>
            <person name="Li S."/>
            <person name="Dong L."/>
            <person name="Huang Y."/>
            <person name="Li L."/>
            <person name="Xi Y."/>
            <person name="Qi Q."/>
            <person name="Li W."/>
            <person name="Zhang B."/>
            <person name="Hu W."/>
            <person name="Zhang Y."/>
            <person name="Tian X."/>
            <person name="Jiao Y."/>
            <person name="Liang X."/>
            <person name="Jin J."/>
            <person name="Gao L."/>
            <person name="Zheng W."/>
            <person name="Hao B."/>
            <person name="Liu S.-M."/>
            <person name="Wang W."/>
            <person name="Yuan L."/>
            <person name="Cao M."/>
            <person name="McDermott J."/>
            <person name="Samudrala R."/>
            <person name="Wang J."/>
            <person name="Wong G.K.-S."/>
            <person name="Yang H."/>
        </authorList>
    </citation>
    <scope>NUCLEOTIDE SEQUENCE [LARGE SCALE GENOMIC DNA]</scope>
    <source>
        <strain>cv. Nipponbare</strain>
    </source>
</reference>
<reference key="5">
    <citation type="journal article" date="2003" name="Science">
        <title>Collection, mapping, and annotation of over 28,000 cDNA clones from japonica rice.</title>
        <authorList>
            <consortium name="The rice full-length cDNA consortium"/>
        </authorList>
    </citation>
    <scope>NUCLEOTIDE SEQUENCE [LARGE SCALE MRNA]</scope>
    <source>
        <strain>cv. Nipponbare</strain>
    </source>
</reference>
<comment type="function">
    <text evidence="1">Methylates (mono- and asymmetric dimethylation) the guanidino nitrogens of arginyl residues in several proteins involved in DNA packaging, transcription regulation, and mRNA stability. Recruited to promoters upon gene activation, methylates histone H3 and activates transcription via chromatin remodeling.</text>
</comment>
<comment type="catalytic activity">
    <reaction>
        <text>L-arginyl-[protein] + 2 S-adenosyl-L-methionine = N(omega),N(omega)-dimethyl-L-arginyl-[protein] + 2 S-adenosyl-L-homocysteine + 2 H(+)</text>
        <dbReference type="Rhea" id="RHEA:48096"/>
        <dbReference type="Rhea" id="RHEA-COMP:10532"/>
        <dbReference type="Rhea" id="RHEA-COMP:11991"/>
        <dbReference type="ChEBI" id="CHEBI:15378"/>
        <dbReference type="ChEBI" id="CHEBI:29965"/>
        <dbReference type="ChEBI" id="CHEBI:57856"/>
        <dbReference type="ChEBI" id="CHEBI:59789"/>
        <dbReference type="ChEBI" id="CHEBI:61897"/>
        <dbReference type="EC" id="2.1.1.319"/>
    </reaction>
</comment>
<comment type="subcellular location">
    <subcellularLocation>
        <location evidence="1">Nucleus</location>
    </subcellularLocation>
    <subcellularLocation>
        <location evidence="1">Cytoplasm</location>
    </subcellularLocation>
</comment>
<comment type="similarity">
    <text evidence="2">Belongs to the class I-like SAM-binding methyltransferase superfamily. Protein arginine N-methyltransferase family.</text>
</comment>